<evidence type="ECO:0000255" key="1">
    <source>
        <dbReference type="HAMAP-Rule" id="MF_00627"/>
    </source>
</evidence>
<feature type="chain" id="PRO_1000130560" description="L-threonine 3-dehydrogenase">
    <location>
        <begin position="1"/>
        <end position="341"/>
    </location>
</feature>
<feature type="active site" description="Charge relay system" evidence="1">
    <location>
        <position position="40"/>
    </location>
</feature>
<feature type="active site" description="Charge relay system" evidence="1">
    <location>
        <position position="43"/>
    </location>
</feature>
<feature type="binding site" evidence="1">
    <location>
        <position position="38"/>
    </location>
    <ligand>
        <name>Zn(2+)</name>
        <dbReference type="ChEBI" id="CHEBI:29105"/>
        <label>1</label>
        <note>catalytic</note>
    </ligand>
</feature>
<feature type="binding site" evidence="1">
    <location>
        <position position="63"/>
    </location>
    <ligand>
        <name>Zn(2+)</name>
        <dbReference type="ChEBI" id="CHEBI:29105"/>
        <label>1</label>
        <note>catalytic</note>
    </ligand>
</feature>
<feature type="binding site" evidence="1">
    <location>
        <position position="64"/>
    </location>
    <ligand>
        <name>Zn(2+)</name>
        <dbReference type="ChEBI" id="CHEBI:29105"/>
        <label>1</label>
        <note>catalytic</note>
    </ligand>
</feature>
<feature type="binding site" evidence="1">
    <location>
        <position position="93"/>
    </location>
    <ligand>
        <name>Zn(2+)</name>
        <dbReference type="ChEBI" id="CHEBI:29105"/>
        <label>2</label>
    </ligand>
</feature>
<feature type="binding site" evidence="1">
    <location>
        <position position="96"/>
    </location>
    <ligand>
        <name>Zn(2+)</name>
        <dbReference type="ChEBI" id="CHEBI:29105"/>
        <label>2</label>
    </ligand>
</feature>
<feature type="binding site" evidence="1">
    <location>
        <position position="99"/>
    </location>
    <ligand>
        <name>Zn(2+)</name>
        <dbReference type="ChEBI" id="CHEBI:29105"/>
        <label>2</label>
    </ligand>
</feature>
<feature type="binding site" evidence="1">
    <location>
        <position position="107"/>
    </location>
    <ligand>
        <name>Zn(2+)</name>
        <dbReference type="ChEBI" id="CHEBI:29105"/>
        <label>2</label>
    </ligand>
</feature>
<feature type="binding site" evidence="1">
    <location>
        <position position="175"/>
    </location>
    <ligand>
        <name>NAD(+)</name>
        <dbReference type="ChEBI" id="CHEBI:57540"/>
    </ligand>
</feature>
<feature type="binding site" evidence="1">
    <location>
        <position position="195"/>
    </location>
    <ligand>
        <name>NAD(+)</name>
        <dbReference type="ChEBI" id="CHEBI:57540"/>
    </ligand>
</feature>
<feature type="binding site" evidence="1">
    <location>
        <position position="200"/>
    </location>
    <ligand>
        <name>NAD(+)</name>
        <dbReference type="ChEBI" id="CHEBI:57540"/>
    </ligand>
</feature>
<feature type="binding site" evidence="1">
    <location>
        <begin position="262"/>
        <end position="264"/>
    </location>
    <ligand>
        <name>NAD(+)</name>
        <dbReference type="ChEBI" id="CHEBI:57540"/>
    </ligand>
</feature>
<feature type="binding site" evidence="1">
    <location>
        <begin position="286"/>
        <end position="287"/>
    </location>
    <ligand>
        <name>NAD(+)</name>
        <dbReference type="ChEBI" id="CHEBI:57540"/>
    </ligand>
</feature>
<feature type="site" description="Important for catalytic activity for the proton relay mechanism but does not participate directly in the coordination of zinc atom" evidence="1">
    <location>
        <position position="148"/>
    </location>
</feature>
<organism>
    <name type="scientific">Salmonella enteritidis PT4 (strain P125109)</name>
    <dbReference type="NCBI Taxonomy" id="550537"/>
    <lineage>
        <taxon>Bacteria</taxon>
        <taxon>Pseudomonadati</taxon>
        <taxon>Pseudomonadota</taxon>
        <taxon>Gammaproteobacteria</taxon>
        <taxon>Enterobacterales</taxon>
        <taxon>Enterobacteriaceae</taxon>
        <taxon>Salmonella</taxon>
    </lineage>
</organism>
<proteinExistence type="inferred from homology"/>
<name>TDH_SALEP</name>
<keyword id="KW-0963">Cytoplasm</keyword>
<keyword id="KW-0479">Metal-binding</keyword>
<keyword id="KW-0520">NAD</keyword>
<keyword id="KW-0560">Oxidoreductase</keyword>
<keyword id="KW-0862">Zinc</keyword>
<sequence>MKALSKLKAEEGIWMTDVPEPEVGHNDLLIKIRKTAICGTDVHIYNWDDWSQKTIPVPMVVGHEYVGEVVGIGQEVKGFKIGDRVSGEGHITCGHCRNCRGGRTHLCRNTTGVGVNRPGCFAEYLVIPAFNAFKIPDNISDDLASIFDPFGNAVHTALSFDLVGEDVLVSGAGPIGVMAAAVAKHVGARHVVITDVNEYRLELARKMGVTRAVNVAKESLNDVMAELGMTEGFDVGLEMSGAPPAFRTMLDTMNHGGRIAMLGIPPSDMSIDWTKVIFKGLFIKGIYGREMFETWYKMAALIQSGLDLSPIITHRFSIDDFQKGFDAMRSGQSGKVILSWD</sequence>
<comment type="function">
    <text evidence="1">Catalyzes the NAD(+)-dependent oxidation of L-threonine to 2-amino-3-ketobutyrate.</text>
</comment>
<comment type="catalytic activity">
    <reaction evidence="1">
        <text>L-threonine + NAD(+) = (2S)-2-amino-3-oxobutanoate + NADH + H(+)</text>
        <dbReference type="Rhea" id="RHEA:13161"/>
        <dbReference type="ChEBI" id="CHEBI:15378"/>
        <dbReference type="ChEBI" id="CHEBI:57540"/>
        <dbReference type="ChEBI" id="CHEBI:57926"/>
        <dbReference type="ChEBI" id="CHEBI:57945"/>
        <dbReference type="ChEBI" id="CHEBI:78948"/>
        <dbReference type="EC" id="1.1.1.103"/>
    </reaction>
</comment>
<comment type="cofactor">
    <cofactor evidence="1">
        <name>Zn(2+)</name>
        <dbReference type="ChEBI" id="CHEBI:29105"/>
    </cofactor>
    <text evidence="1">Binds 2 Zn(2+) ions per subunit.</text>
</comment>
<comment type="pathway">
    <text evidence="1">Amino-acid degradation; L-threonine degradation via oxydo-reductase pathway; glycine from L-threonine: step 1/2.</text>
</comment>
<comment type="subunit">
    <text evidence="1">Homotetramer.</text>
</comment>
<comment type="subcellular location">
    <subcellularLocation>
        <location evidence="1">Cytoplasm</location>
    </subcellularLocation>
</comment>
<comment type="similarity">
    <text evidence="1">Belongs to the zinc-containing alcohol dehydrogenase family.</text>
</comment>
<dbReference type="EC" id="1.1.1.103" evidence="1"/>
<dbReference type="EMBL" id="AM933172">
    <property type="protein sequence ID" value="CAR35109.1"/>
    <property type="molecule type" value="Genomic_DNA"/>
</dbReference>
<dbReference type="RefSeq" id="WP_000645990.1">
    <property type="nucleotide sequence ID" value="NC_011294.1"/>
</dbReference>
<dbReference type="SMR" id="B5R5E1"/>
<dbReference type="KEGG" id="set:SEN3530"/>
<dbReference type="HOGENOM" id="CLU_026673_11_0_6"/>
<dbReference type="UniPathway" id="UPA00046">
    <property type="reaction ID" value="UER00505"/>
</dbReference>
<dbReference type="Proteomes" id="UP000000613">
    <property type="component" value="Chromosome"/>
</dbReference>
<dbReference type="GO" id="GO:0005737">
    <property type="term" value="C:cytoplasm"/>
    <property type="evidence" value="ECO:0007669"/>
    <property type="project" value="UniProtKB-SubCell"/>
</dbReference>
<dbReference type="GO" id="GO:0008743">
    <property type="term" value="F:L-threonine 3-dehydrogenase activity"/>
    <property type="evidence" value="ECO:0007669"/>
    <property type="project" value="UniProtKB-UniRule"/>
</dbReference>
<dbReference type="GO" id="GO:0008270">
    <property type="term" value="F:zinc ion binding"/>
    <property type="evidence" value="ECO:0007669"/>
    <property type="project" value="UniProtKB-UniRule"/>
</dbReference>
<dbReference type="GO" id="GO:0019518">
    <property type="term" value="P:L-threonine catabolic process to glycine"/>
    <property type="evidence" value="ECO:0007669"/>
    <property type="project" value="UniProtKB-UniPathway"/>
</dbReference>
<dbReference type="FunFam" id="3.40.50.720:FF:000059">
    <property type="entry name" value="L-threonine 3-dehydrogenase"/>
    <property type="match status" value="1"/>
</dbReference>
<dbReference type="Gene3D" id="3.90.180.10">
    <property type="entry name" value="Medium-chain alcohol dehydrogenases, catalytic domain"/>
    <property type="match status" value="1"/>
</dbReference>
<dbReference type="Gene3D" id="3.40.50.720">
    <property type="entry name" value="NAD(P)-binding Rossmann-like Domain"/>
    <property type="match status" value="1"/>
</dbReference>
<dbReference type="HAMAP" id="MF_00627">
    <property type="entry name" value="Thr_dehydrog"/>
    <property type="match status" value="1"/>
</dbReference>
<dbReference type="InterPro" id="IPR013149">
    <property type="entry name" value="ADH-like_C"/>
</dbReference>
<dbReference type="InterPro" id="IPR013154">
    <property type="entry name" value="ADH-like_N"/>
</dbReference>
<dbReference type="InterPro" id="IPR002328">
    <property type="entry name" value="ADH_Zn_CS"/>
</dbReference>
<dbReference type="InterPro" id="IPR011032">
    <property type="entry name" value="GroES-like_sf"/>
</dbReference>
<dbReference type="InterPro" id="IPR004627">
    <property type="entry name" value="L-Threonine_3-DHase"/>
</dbReference>
<dbReference type="InterPro" id="IPR036291">
    <property type="entry name" value="NAD(P)-bd_dom_sf"/>
</dbReference>
<dbReference type="InterPro" id="IPR020843">
    <property type="entry name" value="PKS_ER"/>
</dbReference>
<dbReference type="InterPro" id="IPR050129">
    <property type="entry name" value="Zn_alcohol_dh"/>
</dbReference>
<dbReference type="NCBIfam" id="NF003808">
    <property type="entry name" value="PRK05396.1"/>
    <property type="match status" value="1"/>
</dbReference>
<dbReference type="NCBIfam" id="TIGR00692">
    <property type="entry name" value="tdh"/>
    <property type="match status" value="1"/>
</dbReference>
<dbReference type="PANTHER" id="PTHR43401">
    <property type="entry name" value="L-THREONINE 3-DEHYDROGENASE"/>
    <property type="match status" value="1"/>
</dbReference>
<dbReference type="PANTHER" id="PTHR43401:SF2">
    <property type="entry name" value="L-THREONINE 3-DEHYDROGENASE"/>
    <property type="match status" value="1"/>
</dbReference>
<dbReference type="Pfam" id="PF08240">
    <property type="entry name" value="ADH_N"/>
    <property type="match status" value="1"/>
</dbReference>
<dbReference type="Pfam" id="PF00107">
    <property type="entry name" value="ADH_zinc_N"/>
    <property type="match status" value="1"/>
</dbReference>
<dbReference type="SMART" id="SM00829">
    <property type="entry name" value="PKS_ER"/>
    <property type="match status" value="1"/>
</dbReference>
<dbReference type="SUPFAM" id="SSF50129">
    <property type="entry name" value="GroES-like"/>
    <property type="match status" value="1"/>
</dbReference>
<dbReference type="SUPFAM" id="SSF51735">
    <property type="entry name" value="NAD(P)-binding Rossmann-fold domains"/>
    <property type="match status" value="1"/>
</dbReference>
<dbReference type="PROSITE" id="PS00059">
    <property type="entry name" value="ADH_ZINC"/>
    <property type="match status" value="1"/>
</dbReference>
<protein>
    <recommendedName>
        <fullName evidence="1">L-threonine 3-dehydrogenase</fullName>
        <shortName evidence="1">TDH</shortName>
        <ecNumber evidence="1">1.1.1.103</ecNumber>
    </recommendedName>
</protein>
<accession>B5R5E1</accession>
<reference key="1">
    <citation type="journal article" date="2008" name="Genome Res.">
        <title>Comparative genome analysis of Salmonella enteritidis PT4 and Salmonella gallinarum 287/91 provides insights into evolutionary and host adaptation pathways.</title>
        <authorList>
            <person name="Thomson N.R."/>
            <person name="Clayton D.J."/>
            <person name="Windhorst D."/>
            <person name="Vernikos G."/>
            <person name="Davidson S."/>
            <person name="Churcher C."/>
            <person name="Quail M.A."/>
            <person name="Stevens M."/>
            <person name="Jones M.A."/>
            <person name="Watson M."/>
            <person name="Barron A."/>
            <person name="Layton A."/>
            <person name="Pickard D."/>
            <person name="Kingsley R.A."/>
            <person name="Bignell A."/>
            <person name="Clark L."/>
            <person name="Harris B."/>
            <person name="Ormond D."/>
            <person name="Abdellah Z."/>
            <person name="Brooks K."/>
            <person name="Cherevach I."/>
            <person name="Chillingworth T."/>
            <person name="Woodward J."/>
            <person name="Norberczak H."/>
            <person name="Lord A."/>
            <person name="Arrowsmith C."/>
            <person name="Jagels K."/>
            <person name="Moule S."/>
            <person name="Mungall K."/>
            <person name="Saunders M."/>
            <person name="Whitehead S."/>
            <person name="Chabalgoity J.A."/>
            <person name="Maskell D."/>
            <person name="Humphreys T."/>
            <person name="Roberts M."/>
            <person name="Barrow P.A."/>
            <person name="Dougan G."/>
            <person name="Parkhill J."/>
        </authorList>
    </citation>
    <scope>NUCLEOTIDE SEQUENCE [LARGE SCALE GENOMIC DNA]</scope>
    <source>
        <strain>P125109</strain>
    </source>
</reference>
<gene>
    <name evidence="1" type="primary">tdh</name>
    <name type="ordered locus">SEN3530</name>
</gene>